<accession>P0A5Q7</accession>
<accession>A0A1R3XUR1</accession>
<accession>P71697</accession>
<accession>X2BDU6</accession>
<gene>
    <name type="primary">mtc28</name>
    <name type="ordered locus">BQ2027_MB0041C</name>
</gene>
<comment type="similarity">
    <text evidence="3">To M.leprae ML0031.</text>
</comment>
<keyword id="KW-1185">Reference proteome</keyword>
<keyword id="KW-0732">Signal</keyword>
<feature type="signal peptide" evidence="1">
    <location>
        <begin position="1"/>
        <end position="32"/>
    </location>
</feature>
<feature type="chain" id="PRO_0000022092" description="Proline-rich 28 kDa antigen">
    <location>
        <begin position="33"/>
        <end position="310"/>
    </location>
</feature>
<feature type="region of interest" description="Disordered" evidence="2">
    <location>
        <begin position="278"/>
        <end position="310"/>
    </location>
</feature>
<proteinExistence type="inferred from homology"/>
<reference key="1">
    <citation type="journal article" date="2003" name="Proc. Natl. Acad. Sci. U.S.A.">
        <title>The complete genome sequence of Mycobacterium bovis.</title>
        <authorList>
            <person name="Garnier T."/>
            <person name="Eiglmeier K."/>
            <person name="Camus J.-C."/>
            <person name="Medina N."/>
            <person name="Mansoor H."/>
            <person name="Pryor M."/>
            <person name="Duthoy S."/>
            <person name="Grondin S."/>
            <person name="Lacroix C."/>
            <person name="Monsempe C."/>
            <person name="Simon S."/>
            <person name="Harris B."/>
            <person name="Atkin R."/>
            <person name="Doggett J."/>
            <person name="Mayes R."/>
            <person name="Keating L."/>
            <person name="Wheeler P.R."/>
            <person name="Parkhill J."/>
            <person name="Barrell B.G."/>
            <person name="Cole S.T."/>
            <person name="Gordon S.V."/>
            <person name="Hewinson R.G."/>
        </authorList>
    </citation>
    <scope>NUCLEOTIDE SEQUENCE [LARGE SCALE GENOMIC DNA]</scope>
    <source>
        <strain>ATCC BAA-935 / AF2122/97</strain>
    </source>
</reference>
<reference key="2">
    <citation type="journal article" date="2017" name="Genome Announc.">
        <title>Updated reference genome sequence and annotation of Mycobacterium bovis AF2122/97.</title>
        <authorList>
            <person name="Malone K.M."/>
            <person name="Farrell D."/>
            <person name="Stuber T.P."/>
            <person name="Schubert O.T."/>
            <person name="Aebersold R."/>
            <person name="Robbe-Austerman S."/>
            <person name="Gordon S.V."/>
        </authorList>
    </citation>
    <scope>NUCLEOTIDE SEQUENCE [LARGE SCALE GENOMIC DNA]</scope>
    <scope>GENOME REANNOTATION</scope>
    <source>
        <strain>ATCC BAA-935 / AF2122/97</strain>
    </source>
</reference>
<organism>
    <name type="scientific">Mycobacterium bovis (strain ATCC BAA-935 / AF2122/97)</name>
    <dbReference type="NCBI Taxonomy" id="233413"/>
    <lineage>
        <taxon>Bacteria</taxon>
        <taxon>Bacillati</taxon>
        <taxon>Actinomycetota</taxon>
        <taxon>Actinomycetes</taxon>
        <taxon>Mycobacteriales</taxon>
        <taxon>Mycobacteriaceae</taxon>
        <taxon>Mycobacterium</taxon>
        <taxon>Mycobacterium tuberculosis complex</taxon>
    </lineage>
</organism>
<protein>
    <recommendedName>
        <fullName>Proline-rich 28 kDa antigen</fullName>
    </recommendedName>
</protein>
<name>PR28_MYCBO</name>
<sequence length="310" mass="31924">MIQIARTWRVFAGGMATGFIGVVLVTAGKASADPLLPPPPIPAPVSAPATVPPVQNLTALPGGSSNRFSPAPAPAPIASPIPVGAPGSTAVPPLPPPVTPAISGTLRDHLREKGVKLEAQRPHGFKALDITLPMPPRWTQVPDPNVPDAFVVIADRLGNSVYTSNAQLVVYRLIGDFDPAEAITHGYIDSQKLLAWQTTNASMANFDGFPSSIIEGTYRENDMTLNTSRRHVIATSGADKYLVSLSVTTALSQAVTDGPATDAIVNGFQVVAHAAPAQAPAPAPGSAPVGLPGQAPGYPPAGTLTPVPPR</sequence>
<dbReference type="EMBL" id="LT708304">
    <property type="protein sequence ID" value="SIT98401.1"/>
    <property type="molecule type" value="Genomic_DNA"/>
</dbReference>
<dbReference type="RefSeq" id="NP_853710.1">
    <property type="nucleotide sequence ID" value="NC_002945.3"/>
</dbReference>
<dbReference type="RefSeq" id="WP_003900793.1">
    <property type="nucleotide sequence ID" value="NC_002945.4"/>
</dbReference>
<dbReference type="SMR" id="P0A5Q7"/>
<dbReference type="KEGG" id="mbo:BQ2027_MB0041C"/>
<dbReference type="PATRIC" id="fig|233413.5.peg.47"/>
<dbReference type="Proteomes" id="UP000001419">
    <property type="component" value="Chromosome"/>
</dbReference>
<dbReference type="Gene3D" id="3.40.1000.10">
    <property type="entry name" value="Mog1/PsbP, alpha/beta/alpha sandwich"/>
    <property type="match status" value="1"/>
</dbReference>
<dbReference type="InterPro" id="IPR019674">
    <property type="entry name" value="Lipoprotein_LpqN/LpqT-like"/>
</dbReference>
<dbReference type="Pfam" id="PF10738">
    <property type="entry name" value="Lpp-LpqN"/>
    <property type="match status" value="1"/>
</dbReference>
<evidence type="ECO:0000255" key="1"/>
<evidence type="ECO:0000256" key="2">
    <source>
        <dbReference type="SAM" id="MobiDB-lite"/>
    </source>
</evidence>
<evidence type="ECO:0000305" key="3"/>